<evidence type="ECO:0000250" key="1"/>
<evidence type="ECO:0000255" key="2"/>
<evidence type="ECO:0000305" key="3"/>
<name>CHS7_PHANO</name>
<gene>
    <name type="primary">CHS7</name>
    <name type="ORF">SNOG_10036</name>
</gene>
<accession>Q0UDX8</accession>
<sequence length="332" mass="36999">MGFGDFSTICTKAAIPLCALVGEQQINGGAGIQTNCYSRTIEIANTLIFQCANDFMHILAMVMTVIMIIHVRSKFTAVGRKEITSVFYIYLLLTIISLILDAGVTAPGSAPYPYFAAVQNGLVSALCTCLLINGFVGFQLYEDGTTLSVWLLRLCSLAMFVVSGAVSLLTFKNWAGLSSKNPIGIMIVTYIVNAIFLFVYVVSQIILVVGTLEDRWPLGDISFGVFFFVIGQVILYVFSDTICDNVQHYIDGLFFATICNLLAVMMVYKYWDSITREDLEFSVGVKQHNWEVKELLPDEDKRGTVYQDSDYTPSLYQQQYNGRHSHYSNLGH</sequence>
<protein>
    <recommendedName>
        <fullName>Chitin synthase export chaperone</fullName>
    </recommendedName>
</protein>
<organism>
    <name type="scientific">Phaeosphaeria nodorum (strain SN15 / ATCC MYA-4574 / FGSC 10173)</name>
    <name type="common">Glume blotch fungus</name>
    <name type="synonym">Parastagonospora nodorum</name>
    <dbReference type="NCBI Taxonomy" id="321614"/>
    <lineage>
        <taxon>Eukaryota</taxon>
        <taxon>Fungi</taxon>
        <taxon>Dikarya</taxon>
        <taxon>Ascomycota</taxon>
        <taxon>Pezizomycotina</taxon>
        <taxon>Dothideomycetes</taxon>
        <taxon>Pleosporomycetidae</taxon>
        <taxon>Pleosporales</taxon>
        <taxon>Pleosporineae</taxon>
        <taxon>Phaeosphaeriaceae</taxon>
        <taxon>Parastagonospora</taxon>
    </lineage>
</organism>
<proteinExistence type="inferred from homology"/>
<keyword id="KW-0961">Cell wall biogenesis/degradation</keyword>
<keyword id="KW-0256">Endoplasmic reticulum</keyword>
<keyword id="KW-0472">Membrane</keyword>
<keyword id="KW-0653">Protein transport</keyword>
<keyword id="KW-0812">Transmembrane</keyword>
<keyword id="KW-1133">Transmembrane helix</keyword>
<keyword id="KW-0813">Transport</keyword>
<feature type="chain" id="PRO_0000280582" description="Chitin synthase export chaperone">
    <location>
        <begin position="1"/>
        <end position="332"/>
    </location>
</feature>
<feature type="transmembrane region" description="Helical" evidence="2">
    <location>
        <begin position="51"/>
        <end position="71"/>
    </location>
</feature>
<feature type="transmembrane region" description="Helical" evidence="2">
    <location>
        <begin position="86"/>
        <end position="106"/>
    </location>
</feature>
<feature type="transmembrane region" description="Helical" evidence="2">
    <location>
        <begin position="121"/>
        <end position="141"/>
    </location>
</feature>
<feature type="transmembrane region" description="Helical" evidence="2">
    <location>
        <begin position="149"/>
        <end position="169"/>
    </location>
</feature>
<feature type="transmembrane region" description="Helical" evidence="2">
    <location>
        <begin position="182"/>
        <end position="202"/>
    </location>
</feature>
<feature type="transmembrane region" description="Helical" evidence="2">
    <location>
        <begin position="218"/>
        <end position="238"/>
    </location>
</feature>
<feature type="transmembrane region" description="Helical" evidence="2">
    <location>
        <begin position="248"/>
        <end position="268"/>
    </location>
</feature>
<dbReference type="EMBL" id="CH445340">
    <property type="protein sequence ID" value="EAT82371.1"/>
    <property type="molecule type" value="Genomic_DNA"/>
</dbReference>
<dbReference type="RefSeq" id="XP_001800319.1">
    <property type="nucleotide sequence ID" value="XM_001800267.1"/>
</dbReference>
<dbReference type="FunCoup" id="Q0UDX8">
    <property type="interactions" value="37"/>
</dbReference>
<dbReference type="STRING" id="321614.Q0UDX8"/>
<dbReference type="EnsemblFungi" id="SNOT_10036">
    <property type="protein sequence ID" value="SNOT_10036"/>
    <property type="gene ID" value="SNOG_10036"/>
</dbReference>
<dbReference type="GeneID" id="5977225"/>
<dbReference type="KEGG" id="pno:SNOG_10036"/>
<dbReference type="VEuPathDB" id="FungiDB:JI435_100360"/>
<dbReference type="eggNOG" id="ENOG502QRVH">
    <property type="taxonomic scope" value="Eukaryota"/>
</dbReference>
<dbReference type="HOGENOM" id="CLU_050424_1_1_1"/>
<dbReference type="InParanoid" id="Q0UDX8"/>
<dbReference type="OMA" id="TVWEVKD"/>
<dbReference type="OrthoDB" id="2189463at2759"/>
<dbReference type="Proteomes" id="UP000001055">
    <property type="component" value="Unassembled WGS sequence"/>
</dbReference>
<dbReference type="GO" id="GO:0005789">
    <property type="term" value="C:endoplasmic reticulum membrane"/>
    <property type="evidence" value="ECO:0000318"/>
    <property type="project" value="GO_Central"/>
</dbReference>
<dbReference type="GO" id="GO:0051082">
    <property type="term" value="F:unfolded protein binding"/>
    <property type="evidence" value="ECO:0000318"/>
    <property type="project" value="GO_Central"/>
</dbReference>
<dbReference type="GO" id="GO:0071555">
    <property type="term" value="P:cell wall organization"/>
    <property type="evidence" value="ECO:0007669"/>
    <property type="project" value="UniProtKB-KW"/>
</dbReference>
<dbReference type="GO" id="GO:0006031">
    <property type="term" value="P:chitin biosynthetic process"/>
    <property type="evidence" value="ECO:0000318"/>
    <property type="project" value="GO_Central"/>
</dbReference>
<dbReference type="GO" id="GO:0006457">
    <property type="term" value="P:protein folding"/>
    <property type="evidence" value="ECO:0000318"/>
    <property type="project" value="GO_Central"/>
</dbReference>
<dbReference type="GO" id="GO:0015031">
    <property type="term" value="P:protein transport"/>
    <property type="evidence" value="ECO:0007669"/>
    <property type="project" value="UniProtKB-KW"/>
</dbReference>
<dbReference type="InterPro" id="IPR022057">
    <property type="entry name" value="Chs7"/>
</dbReference>
<dbReference type="PANTHER" id="PTHR35329">
    <property type="entry name" value="CHITIN SYNTHASE EXPORT CHAPERONE"/>
    <property type="match status" value="1"/>
</dbReference>
<dbReference type="PANTHER" id="PTHR35329:SF2">
    <property type="entry name" value="CHITIN SYNTHASE EXPORT CHAPERONE"/>
    <property type="match status" value="1"/>
</dbReference>
<dbReference type="Pfam" id="PF12271">
    <property type="entry name" value="Chs7"/>
    <property type="match status" value="1"/>
</dbReference>
<reference key="1">
    <citation type="journal article" date="2007" name="Plant Cell">
        <title>Dothideomycete-plant interactions illuminated by genome sequencing and EST analysis of the wheat pathogen Stagonospora nodorum.</title>
        <authorList>
            <person name="Hane J.K."/>
            <person name="Lowe R.G.T."/>
            <person name="Solomon P.S."/>
            <person name="Tan K.-C."/>
            <person name="Schoch C.L."/>
            <person name="Spatafora J.W."/>
            <person name="Crous P.W."/>
            <person name="Kodira C.D."/>
            <person name="Birren B.W."/>
            <person name="Galagan J.E."/>
            <person name="Torriani S.F.F."/>
            <person name="McDonald B.A."/>
            <person name="Oliver R.P."/>
        </authorList>
    </citation>
    <scope>NUCLEOTIDE SEQUENCE [LARGE SCALE GENOMIC DNA]</scope>
    <source>
        <strain>SN15 / ATCC MYA-4574 / FGSC 10173</strain>
    </source>
</reference>
<comment type="function">
    <text evidence="1">Chaperone required for the export of the chitin synthase CHS3 from the endoplasmic reticulum.</text>
</comment>
<comment type="subunit">
    <text evidence="1">Interacts with CHS3.</text>
</comment>
<comment type="subcellular location">
    <subcellularLocation>
        <location evidence="1">Endoplasmic reticulum membrane</location>
        <topology evidence="1">Multi-pass membrane protein</topology>
    </subcellularLocation>
</comment>
<comment type="similarity">
    <text evidence="3">Belongs to the CHS7 family.</text>
</comment>